<comment type="function">
    <text evidence="2 3">Subunit of the oligosaccharyl transferase (OST) complex that catalyzes the initial transfer of a defined glycan (Glc(3)Man(9)GlcNAc(2) in eukaryotes) from the lipid carrier dolichol-pyrophosphate to an asparagine residue within an Asn-X-Ser/Thr consensus motif in nascent polypeptide chains, the first step in protein N-glycosylation (By similarity). N-glycosylation occurs cotranslationally and the complex associates with the Sec61 complex at the channel-forming translocon complex that mediates protein translocation across the endoplasmic reticulum (ER). All subunits are required for a maximal enzyme activity (By similarity). Required for the assembly of both SST3A- and SS3B-containing OST complexes (By similarity).</text>
</comment>
<comment type="pathway">
    <text evidence="2">Protein modification; protein glycosylation.</text>
</comment>
<comment type="subunit">
    <text evidence="3">Component of the oligosaccharyltransferase (OST) complex.</text>
</comment>
<comment type="subcellular location">
    <subcellularLocation>
        <location evidence="1">Endoplasmic reticulum membrane</location>
        <topology evidence="1">Single-pass type I membrane protein</topology>
    </subcellularLocation>
</comment>
<comment type="similarity">
    <text evidence="5">Belongs to the DDOST 48 kDa subunit family.</text>
</comment>
<proteinExistence type="evidence at transcript level"/>
<evidence type="ECO:0000250" key="1"/>
<evidence type="ECO:0000250" key="2">
    <source>
        <dbReference type="UniProtKB" id="P39656"/>
    </source>
</evidence>
<evidence type="ECO:0000250" key="3">
    <source>
        <dbReference type="UniProtKB" id="Q05052"/>
    </source>
</evidence>
<evidence type="ECO:0000255" key="4"/>
<evidence type="ECO:0000305" key="5"/>
<accession>B1H3C9</accession>
<keyword id="KW-0256">Endoplasmic reticulum</keyword>
<keyword id="KW-0472">Membrane</keyword>
<keyword id="KW-1185">Reference proteome</keyword>
<keyword id="KW-0732">Signal</keyword>
<keyword id="KW-0812">Transmembrane</keyword>
<keyword id="KW-1133">Transmembrane helix</keyword>
<sequence>MASLRVSVLLVAASCLLLGSGLRAGPRTLVLLENINLRETHSLFFRSLSDRGFDLSFRTADDPSLSLIKYGEFLYDNLIIFSPSVEDFGGNINIETISSFIDGGGSVLVAASSDIGDPLRELGSECGIEFDEDKTAVIDHHNYDISDPGQHSLIVADSESLLKAPTIVGKAPLNPILFRGVGMVADPDNPLVLDILTGSSTSYSFFPDKPITQYPHAVGKNTLLIAGLQARNNARVVFSGSMDFFSDAFFNSAVQKAAGGSNRYAKTGNYELAVALSRWVFKEEGVLRVGQVSHHRVGESSPPSAYTVTDLVEYSIVIEQLSNGKWVPFDGDDIQLEFVRIDPFVRTFLKKNGGKYSVQFKLPDVYGVFQFKVDYNRLGYTHLYSTTQVSVRPLQHTQYERFIPSAYPYYASAFSVMFGLFIFSIVFLHMKEKEKSD</sequence>
<reference key="1">
    <citation type="submission" date="2008-03" db="EMBL/GenBank/DDBJ databases">
        <authorList>
            <consortium name="NIH - Xenopus Gene Collection (XGC) project"/>
        </authorList>
    </citation>
    <scope>NUCLEOTIDE SEQUENCE [LARGE SCALE MRNA]</scope>
    <source>
        <tissue>Embryo</tissue>
    </source>
</reference>
<name>OST48_XENTR</name>
<organism>
    <name type="scientific">Xenopus tropicalis</name>
    <name type="common">Western clawed frog</name>
    <name type="synonym">Silurana tropicalis</name>
    <dbReference type="NCBI Taxonomy" id="8364"/>
    <lineage>
        <taxon>Eukaryota</taxon>
        <taxon>Metazoa</taxon>
        <taxon>Chordata</taxon>
        <taxon>Craniata</taxon>
        <taxon>Vertebrata</taxon>
        <taxon>Euteleostomi</taxon>
        <taxon>Amphibia</taxon>
        <taxon>Batrachia</taxon>
        <taxon>Anura</taxon>
        <taxon>Pipoidea</taxon>
        <taxon>Pipidae</taxon>
        <taxon>Xenopodinae</taxon>
        <taxon>Xenopus</taxon>
        <taxon>Silurana</taxon>
    </lineage>
</organism>
<feature type="signal peptide" evidence="4">
    <location>
        <begin position="1"/>
        <end position="24"/>
    </location>
</feature>
<feature type="chain" id="PRO_0000357450" description="Dolichyl-diphosphooligosaccharide--protein glycosyltransferase 48 kDa subunit">
    <location>
        <begin position="25"/>
        <end position="437"/>
    </location>
</feature>
<feature type="topological domain" description="Lumenal" evidence="4">
    <location>
        <begin position="25"/>
        <end position="407"/>
    </location>
</feature>
<feature type="transmembrane region" description="Helical" evidence="4">
    <location>
        <begin position="408"/>
        <end position="428"/>
    </location>
</feature>
<feature type="topological domain" description="Cytoplasmic" evidence="4">
    <location>
        <begin position="429"/>
        <end position="437"/>
    </location>
</feature>
<protein>
    <recommendedName>
        <fullName evidence="2">Dolichyl-diphosphooligosaccharide--protein glycosyltransferase 48 kDa subunit</fullName>
        <shortName>DDOST 48 kDa subunit</shortName>
        <shortName>Oligosaccharyl transferase 48 kDa subunit</shortName>
    </recommendedName>
</protein>
<gene>
    <name evidence="2" type="primary">ddost</name>
</gene>
<dbReference type="EMBL" id="BC161349">
    <property type="protein sequence ID" value="AAI61349.1"/>
    <property type="molecule type" value="mRNA"/>
</dbReference>
<dbReference type="RefSeq" id="NP_001120481.1">
    <property type="nucleotide sequence ID" value="NM_001127009.1"/>
</dbReference>
<dbReference type="SMR" id="B1H3C9"/>
<dbReference type="FunCoup" id="B1H3C9">
    <property type="interactions" value="2960"/>
</dbReference>
<dbReference type="STRING" id="8364.ENSXETP00000018626"/>
<dbReference type="GeneID" id="100145597"/>
<dbReference type="KEGG" id="xtr:100145597"/>
<dbReference type="AGR" id="Xenbase:XB-GENE-5784936"/>
<dbReference type="CTD" id="1650"/>
<dbReference type="Xenbase" id="XB-GENE-5784936">
    <property type="gene designation" value="ddost"/>
</dbReference>
<dbReference type="InParanoid" id="B1H3C9"/>
<dbReference type="OMA" id="AHDEYPR"/>
<dbReference type="OrthoDB" id="29105at2759"/>
<dbReference type="Reactome" id="R-XTR-6798695">
    <property type="pathway name" value="Neutrophil degranulation"/>
</dbReference>
<dbReference type="UniPathway" id="UPA00378"/>
<dbReference type="Proteomes" id="UP000008143">
    <property type="component" value="Chromosome 7"/>
</dbReference>
<dbReference type="GO" id="GO:0008250">
    <property type="term" value="C:oligosaccharyltransferase complex"/>
    <property type="evidence" value="ECO:0000250"/>
    <property type="project" value="UniProtKB"/>
</dbReference>
<dbReference type="GO" id="GO:0006486">
    <property type="term" value="P:protein glycosylation"/>
    <property type="evidence" value="ECO:0000250"/>
    <property type="project" value="UniProtKB"/>
</dbReference>
<dbReference type="GO" id="GO:0018279">
    <property type="term" value="P:protein N-linked glycosylation via asparagine"/>
    <property type="evidence" value="ECO:0007669"/>
    <property type="project" value="InterPro"/>
</dbReference>
<dbReference type="InterPro" id="IPR005013">
    <property type="entry name" value="DDOST_48_kDa_subunit"/>
</dbReference>
<dbReference type="InterPro" id="IPR055459">
    <property type="entry name" value="OST48_MD"/>
</dbReference>
<dbReference type="InterPro" id="IPR055457">
    <property type="entry name" value="OST48_N"/>
</dbReference>
<dbReference type="PANTHER" id="PTHR10830">
    <property type="entry name" value="DOLICHYL-DIPHOSPHOOLIGOSACCHARIDE--PROTEIN GLYCOSYLTRANSFERASE 48 KDA SUBUNIT"/>
    <property type="match status" value="1"/>
</dbReference>
<dbReference type="PANTHER" id="PTHR10830:SF0">
    <property type="entry name" value="DOLICHYL-DIPHOSPHOOLIGOSACCHARIDE--PROTEIN GLYCOSYLTRANSFERASE 48 KDA SUBUNIT"/>
    <property type="match status" value="1"/>
</dbReference>
<dbReference type="Pfam" id="PF23358">
    <property type="entry name" value="OST48_MD"/>
    <property type="match status" value="1"/>
</dbReference>
<dbReference type="Pfam" id="PF03345">
    <property type="entry name" value="OST48_N"/>
    <property type="match status" value="1"/>
</dbReference>